<sequence length="556" mass="62818">MNVMQENQIKLIEHIKQAVVQAVGLPEVEVPEILLEVPKDKKHGDYSTNIAMQLARVAKKAPRQIAESIVPELKKDNKLIKEVEIAGPGFINFYLDNAYLTELVPVILTEDHKYGESDFGKGEKFQIEFVSANPTGDLHLGHARGAAIGDSLANIMKMAGFDVSREYYINDAGNQINNLVLSAEARYFEALGLESEFPEDGYRGADIISLGKDLAAKYGDKYVNTSEEERRSVFRVDALAFETGKLRADLEEFRVSFDEWFSETSLYEENKVLPALERLRENGYIYEQDGATWLRTTDFEDDKDRVLIKSDGSYTYFLPDIAYHLNKLERGFDVLIDIWGADHHGYIPRMRAAIEALGYSPNQLEVEIIQLVHLFEDGVQVKMSKRTGKSVTMRDLIEEVGLDATRYFFAMRSSDTHMNFDMSLAKSTSNDNPVYYVQYAHARISSILRSGKEQGLEVTKDADMSLLQTEAEYDLLKVLGEFADVVAEAAAKRAPHRIVRYLNDLATAFHRFYNSNKVLDMDNLEVTQARLSLIKTAQITLRNGLTLLGVSAPEKM</sequence>
<organism>
    <name type="scientific">Listeria welshimeri serovar 6b (strain ATCC 35897 / DSM 20650 / CCUG 15529 / CIP 8149 / NCTC 11857 / SLCC 5334 / V8)</name>
    <dbReference type="NCBI Taxonomy" id="386043"/>
    <lineage>
        <taxon>Bacteria</taxon>
        <taxon>Bacillati</taxon>
        <taxon>Bacillota</taxon>
        <taxon>Bacilli</taxon>
        <taxon>Bacillales</taxon>
        <taxon>Listeriaceae</taxon>
        <taxon>Listeria</taxon>
    </lineage>
</organism>
<comment type="catalytic activity">
    <reaction evidence="1">
        <text>tRNA(Arg) + L-arginine + ATP = L-arginyl-tRNA(Arg) + AMP + diphosphate</text>
        <dbReference type="Rhea" id="RHEA:20301"/>
        <dbReference type="Rhea" id="RHEA-COMP:9658"/>
        <dbReference type="Rhea" id="RHEA-COMP:9673"/>
        <dbReference type="ChEBI" id="CHEBI:30616"/>
        <dbReference type="ChEBI" id="CHEBI:32682"/>
        <dbReference type="ChEBI" id="CHEBI:33019"/>
        <dbReference type="ChEBI" id="CHEBI:78442"/>
        <dbReference type="ChEBI" id="CHEBI:78513"/>
        <dbReference type="ChEBI" id="CHEBI:456215"/>
        <dbReference type="EC" id="6.1.1.19"/>
    </reaction>
</comment>
<comment type="subunit">
    <text evidence="1">Monomer.</text>
</comment>
<comment type="subcellular location">
    <subcellularLocation>
        <location evidence="1">Cytoplasm</location>
    </subcellularLocation>
</comment>
<comment type="similarity">
    <text evidence="1">Belongs to the class-I aminoacyl-tRNA synthetase family.</text>
</comment>
<proteinExistence type="inferred from homology"/>
<keyword id="KW-0030">Aminoacyl-tRNA synthetase</keyword>
<keyword id="KW-0067">ATP-binding</keyword>
<keyword id="KW-0963">Cytoplasm</keyword>
<keyword id="KW-0436">Ligase</keyword>
<keyword id="KW-0547">Nucleotide-binding</keyword>
<keyword id="KW-0648">Protein biosynthesis</keyword>
<accession>A0ALP7</accession>
<reference key="1">
    <citation type="journal article" date="2006" name="J. Bacteriol.">
        <title>Whole-genome sequence of Listeria welshimeri reveals common steps in genome reduction with Listeria innocua as compared to Listeria monocytogenes.</title>
        <authorList>
            <person name="Hain T."/>
            <person name="Steinweg C."/>
            <person name="Kuenne C.T."/>
            <person name="Billion A."/>
            <person name="Ghai R."/>
            <person name="Chatterjee S.S."/>
            <person name="Domann E."/>
            <person name="Kaerst U."/>
            <person name="Goesmann A."/>
            <person name="Bekel T."/>
            <person name="Bartels D."/>
            <person name="Kaiser O."/>
            <person name="Meyer F."/>
            <person name="Puehler A."/>
            <person name="Weisshaar B."/>
            <person name="Wehland J."/>
            <person name="Liang C."/>
            <person name="Dandekar T."/>
            <person name="Lampidis R."/>
            <person name="Kreft J."/>
            <person name="Goebel W."/>
            <person name="Chakraborty T."/>
        </authorList>
    </citation>
    <scope>NUCLEOTIDE SEQUENCE [LARGE SCALE GENOMIC DNA]</scope>
    <source>
        <strain>ATCC 35897 / DSM 20650 / CCUG 15529 / CIP 8149 / NCTC 11857 / SLCC 5334 / V8</strain>
    </source>
</reference>
<dbReference type="EC" id="6.1.1.19" evidence="1"/>
<dbReference type="EMBL" id="AM263198">
    <property type="protein sequence ID" value="CAK21929.1"/>
    <property type="molecule type" value="Genomic_DNA"/>
</dbReference>
<dbReference type="RefSeq" id="WP_011703238.1">
    <property type="nucleotide sequence ID" value="NC_008555.1"/>
</dbReference>
<dbReference type="SMR" id="A0ALP7"/>
<dbReference type="STRING" id="386043.lwe2511"/>
<dbReference type="GeneID" id="61190430"/>
<dbReference type="KEGG" id="lwe:lwe2511"/>
<dbReference type="eggNOG" id="COG0018">
    <property type="taxonomic scope" value="Bacteria"/>
</dbReference>
<dbReference type="HOGENOM" id="CLU_006406_0_1_9"/>
<dbReference type="OrthoDB" id="9805987at2"/>
<dbReference type="Proteomes" id="UP000000779">
    <property type="component" value="Chromosome"/>
</dbReference>
<dbReference type="GO" id="GO:0005737">
    <property type="term" value="C:cytoplasm"/>
    <property type="evidence" value="ECO:0007669"/>
    <property type="project" value="UniProtKB-SubCell"/>
</dbReference>
<dbReference type="GO" id="GO:0004814">
    <property type="term" value="F:arginine-tRNA ligase activity"/>
    <property type="evidence" value="ECO:0007669"/>
    <property type="project" value="UniProtKB-UniRule"/>
</dbReference>
<dbReference type="GO" id="GO:0005524">
    <property type="term" value="F:ATP binding"/>
    <property type="evidence" value="ECO:0007669"/>
    <property type="project" value="UniProtKB-UniRule"/>
</dbReference>
<dbReference type="GO" id="GO:0006420">
    <property type="term" value="P:arginyl-tRNA aminoacylation"/>
    <property type="evidence" value="ECO:0007669"/>
    <property type="project" value="UniProtKB-UniRule"/>
</dbReference>
<dbReference type="CDD" id="cd07956">
    <property type="entry name" value="Anticodon_Ia_Arg"/>
    <property type="match status" value="1"/>
</dbReference>
<dbReference type="CDD" id="cd00671">
    <property type="entry name" value="ArgRS_core"/>
    <property type="match status" value="1"/>
</dbReference>
<dbReference type="FunFam" id="1.10.730.10:FF:000008">
    <property type="entry name" value="Arginine--tRNA ligase"/>
    <property type="match status" value="1"/>
</dbReference>
<dbReference type="FunFam" id="3.30.1360.70:FF:000003">
    <property type="entry name" value="Arginine--tRNA ligase"/>
    <property type="match status" value="1"/>
</dbReference>
<dbReference type="FunFam" id="3.40.50.620:FF:000062">
    <property type="entry name" value="Arginine--tRNA ligase"/>
    <property type="match status" value="1"/>
</dbReference>
<dbReference type="Gene3D" id="3.30.1360.70">
    <property type="entry name" value="Arginyl tRNA synthetase N-terminal domain"/>
    <property type="match status" value="1"/>
</dbReference>
<dbReference type="Gene3D" id="3.40.50.620">
    <property type="entry name" value="HUPs"/>
    <property type="match status" value="1"/>
</dbReference>
<dbReference type="Gene3D" id="1.10.730.10">
    <property type="entry name" value="Isoleucyl-tRNA Synthetase, Domain 1"/>
    <property type="match status" value="1"/>
</dbReference>
<dbReference type="HAMAP" id="MF_00123">
    <property type="entry name" value="Arg_tRNA_synth"/>
    <property type="match status" value="1"/>
</dbReference>
<dbReference type="InterPro" id="IPR001412">
    <property type="entry name" value="aa-tRNA-synth_I_CS"/>
</dbReference>
<dbReference type="InterPro" id="IPR001278">
    <property type="entry name" value="Arg-tRNA-ligase"/>
</dbReference>
<dbReference type="InterPro" id="IPR005148">
    <property type="entry name" value="Arg-tRNA-synth_N"/>
</dbReference>
<dbReference type="InterPro" id="IPR036695">
    <property type="entry name" value="Arg-tRNA-synth_N_sf"/>
</dbReference>
<dbReference type="InterPro" id="IPR035684">
    <property type="entry name" value="ArgRS_core"/>
</dbReference>
<dbReference type="InterPro" id="IPR008909">
    <property type="entry name" value="DALR_anticod-bd"/>
</dbReference>
<dbReference type="InterPro" id="IPR014729">
    <property type="entry name" value="Rossmann-like_a/b/a_fold"/>
</dbReference>
<dbReference type="InterPro" id="IPR009080">
    <property type="entry name" value="tRNAsynth_Ia_anticodon-bd"/>
</dbReference>
<dbReference type="NCBIfam" id="TIGR00456">
    <property type="entry name" value="argS"/>
    <property type="match status" value="1"/>
</dbReference>
<dbReference type="PANTHER" id="PTHR11956:SF5">
    <property type="entry name" value="ARGININE--TRNA LIGASE, CYTOPLASMIC"/>
    <property type="match status" value="1"/>
</dbReference>
<dbReference type="PANTHER" id="PTHR11956">
    <property type="entry name" value="ARGINYL-TRNA SYNTHETASE"/>
    <property type="match status" value="1"/>
</dbReference>
<dbReference type="Pfam" id="PF03485">
    <property type="entry name" value="Arg_tRNA_synt_N"/>
    <property type="match status" value="1"/>
</dbReference>
<dbReference type="Pfam" id="PF05746">
    <property type="entry name" value="DALR_1"/>
    <property type="match status" value="1"/>
</dbReference>
<dbReference type="Pfam" id="PF00750">
    <property type="entry name" value="tRNA-synt_1d"/>
    <property type="match status" value="1"/>
</dbReference>
<dbReference type="PRINTS" id="PR01038">
    <property type="entry name" value="TRNASYNTHARG"/>
</dbReference>
<dbReference type="SMART" id="SM01016">
    <property type="entry name" value="Arg_tRNA_synt_N"/>
    <property type="match status" value="1"/>
</dbReference>
<dbReference type="SMART" id="SM00836">
    <property type="entry name" value="DALR_1"/>
    <property type="match status" value="1"/>
</dbReference>
<dbReference type="SUPFAM" id="SSF47323">
    <property type="entry name" value="Anticodon-binding domain of a subclass of class I aminoacyl-tRNA synthetases"/>
    <property type="match status" value="1"/>
</dbReference>
<dbReference type="SUPFAM" id="SSF55190">
    <property type="entry name" value="Arginyl-tRNA synthetase (ArgRS), N-terminal 'additional' domain"/>
    <property type="match status" value="1"/>
</dbReference>
<dbReference type="SUPFAM" id="SSF52374">
    <property type="entry name" value="Nucleotidylyl transferase"/>
    <property type="match status" value="1"/>
</dbReference>
<dbReference type="PROSITE" id="PS00178">
    <property type="entry name" value="AA_TRNA_LIGASE_I"/>
    <property type="match status" value="1"/>
</dbReference>
<evidence type="ECO:0000255" key="1">
    <source>
        <dbReference type="HAMAP-Rule" id="MF_00123"/>
    </source>
</evidence>
<name>SYR_LISW6</name>
<gene>
    <name evidence="1" type="primary">argS</name>
    <name type="ordered locus">lwe2511</name>
</gene>
<protein>
    <recommendedName>
        <fullName evidence="1">Arginine--tRNA ligase</fullName>
        <ecNumber evidence="1">6.1.1.19</ecNumber>
    </recommendedName>
    <alternativeName>
        <fullName evidence="1">Arginyl-tRNA synthetase</fullName>
        <shortName evidence="1">ArgRS</shortName>
    </alternativeName>
</protein>
<feature type="chain" id="PRO_1000018054" description="Arginine--tRNA ligase">
    <location>
        <begin position="1"/>
        <end position="556"/>
    </location>
</feature>
<feature type="short sequence motif" description="'HIGH' region">
    <location>
        <begin position="132"/>
        <end position="142"/>
    </location>
</feature>